<reference key="1">
    <citation type="journal article" date="2002" name="Nucleic Acids Res.">
        <title>Genome sequence of Shigella flexneri 2a: insights into pathogenicity through comparison with genomes of Escherichia coli K12 and O157.</title>
        <authorList>
            <person name="Jin Q."/>
            <person name="Yuan Z."/>
            <person name="Xu J."/>
            <person name="Wang Y."/>
            <person name="Shen Y."/>
            <person name="Lu W."/>
            <person name="Wang J."/>
            <person name="Liu H."/>
            <person name="Yang J."/>
            <person name="Yang F."/>
            <person name="Zhang X."/>
            <person name="Zhang J."/>
            <person name="Yang G."/>
            <person name="Wu H."/>
            <person name="Qu D."/>
            <person name="Dong J."/>
            <person name="Sun L."/>
            <person name="Xue Y."/>
            <person name="Zhao A."/>
            <person name="Gao Y."/>
            <person name="Zhu J."/>
            <person name="Kan B."/>
            <person name="Ding K."/>
            <person name="Chen S."/>
            <person name="Cheng H."/>
            <person name="Yao Z."/>
            <person name="He B."/>
            <person name="Chen R."/>
            <person name="Ma D."/>
            <person name="Qiang B."/>
            <person name="Wen Y."/>
            <person name="Hou Y."/>
            <person name="Yu J."/>
        </authorList>
    </citation>
    <scope>NUCLEOTIDE SEQUENCE [LARGE SCALE GENOMIC DNA]</scope>
    <source>
        <strain>301 / Serotype 2a</strain>
    </source>
</reference>
<reference key="2">
    <citation type="journal article" date="2003" name="Infect. Immun.">
        <title>Complete genome sequence and comparative genomics of Shigella flexneri serotype 2a strain 2457T.</title>
        <authorList>
            <person name="Wei J."/>
            <person name="Goldberg M.B."/>
            <person name="Burland V."/>
            <person name="Venkatesan M.M."/>
            <person name="Deng W."/>
            <person name="Fournier G."/>
            <person name="Mayhew G.F."/>
            <person name="Plunkett G. III"/>
            <person name="Rose D.J."/>
            <person name="Darling A."/>
            <person name="Mau B."/>
            <person name="Perna N.T."/>
            <person name="Payne S.M."/>
            <person name="Runyen-Janecky L.J."/>
            <person name="Zhou S."/>
            <person name="Schwartz D.C."/>
            <person name="Blattner F.R."/>
        </authorList>
    </citation>
    <scope>NUCLEOTIDE SEQUENCE [LARGE SCALE GENOMIC DNA]</scope>
    <source>
        <strain>ATCC 700930 / 2457T / Serotype 2a</strain>
    </source>
</reference>
<keyword id="KW-0963">Cytoplasm</keyword>
<keyword id="KW-1185">Reference proteome</keyword>
<accession>P0AF92</accession>
<accession>P37163</accession>
<dbReference type="EMBL" id="AE005674">
    <property type="protein sequence ID" value="AAN45653.1"/>
    <property type="molecule type" value="Genomic_DNA"/>
</dbReference>
<dbReference type="EMBL" id="AE014073">
    <property type="protein sequence ID" value="AAP19440.1"/>
    <property type="molecule type" value="Genomic_DNA"/>
</dbReference>
<dbReference type="RefSeq" id="WP_000002953.1">
    <property type="nucleotide sequence ID" value="NZ_WPGW01000270.1"/>
</dbReference>
<dbReference type="SMR" id="P0AF92"/>
<dbReference type="STRING" id="198214.SF4234"/>
<dbReference type="PaxDb" id="198214-SF4234"/>
<dbReference type="GeneID" id="93777567"/>
<dbReference type="KEGG" id="sfl:SF4234"/>
<dbReference type="KEGG" id="sfx:S4495"/>
<dbReference type="PATRIC" id="fig|198214.7.peg.4994"/>
<dbReference type="HOGENOM" id="CLU_128640_0_0_6"/>
<dbReference type="Proteomes" id="UP000001006">
    <property type="component" value="Chromosome"/>
</dbReference>
<dbReference type="Proteomes" id="UP000002673">
    <property type="component" value="Chromosome"/>
</dbReference>
<dbReference type="GO" id="GO:0005737">
    <property type="term" value="C:cytoplasm"/>
    <property type="evidence" value="ECO:0007669"/>
    <property type="project" value="UniProtKB-SubCell"/>
</dbReference>
<dbReference type="GO" id="GO:0060698">
    <property type="term" value="F:endoribonuclease inhibitor activity"/>
    <property type="evidence" value="ECO:0007669"/>
    <property type="project" value="UniProtKB-UniRule"/>
</dbReference>
<dbReference type="GO" id="GO:0019899">
    <property type="term" value="F:enzyme binding"/>
    <property type="evidence" value="ECO:0007669"/>
    <property type="project" value="UniProtKB-UniRule"/>
</dbReference>
<dbReference type="FunFam" id="3.30.70.970:FF:000001">
    <property type="entry name" value="Regulator of ribonuclease activity B"/>
    <property type="match status" value="1"/>
</dbReference>
<dbReference type="Gene3D" id="3.30.70.970">
    <property type="entry name" value="RraB-like"/>
    <property type="match status" value="1"/>
</dbReference>
<dbReference type="HAMAP" id="MF_01888">
    <property type="entry name" value="RraB"/>
    <property type="match status" value="1"/>
</dbReference>
<dbReference type="InterPro" id="IPR016716">
    <property type="entry name" value="RraB"/>
</dbReference>
<dbReference type="InterPro" id="IPR036701">
    <property type="entry name" value="RraB-like_sf"/>
</dbReference>
<dbReference type="InterPro" id="IPR009671">
    <property type="entry name" value="RraB_dom"/>
</dbReference>
<dbReference type="NCBIfam" id="NF008393">
    <property type="entry name" value="PRK11191.1"/>
    <property type="match status" value="1"/>
</dbReference>
<dbReference type="Pfam" id="PF06877">
    <property type="entry name" value="RraB"/>
    <property type="match status" value="1"/>
</dbReference>
<dbReference type="PIRSF" id="PIRSF018193">
    <property type="entry name" value="UCP018193"/>
    <property type="match status" value="1"/>
</dbReference>
<dbReference type="SUPFAM" id="SSF89946">
    <property type="entry name" value="Hypothetical protein VC0424"/>
    <property type="match status" value="1"/>
</dbReference>
<gene>
    <name evidence="1" type="primary">rraB</name>
    <name type="ordered locus">SF4234</name>
    <name type="ordered locus">S4495</name>
</gene>
<proteinExistence type="inferred from homology"/>
<protein>
    <recommendedName>
        <fullName evidence="1">Regulator of ribonuclease activity B</fullName>
    </recommendedName>
</protein>
<feature type="chain" id="PRO_0000169763" description="Regulator of ribonuclease activity B">
    <location>
        <begin position="1"/>
        <end position="138"/>
    </location>
</feature>
<feature type="region of interest" description="Disordered" evidence="2">
    <location>
        <begin position="114"/>
        <end position="138"/>
    </location>
</feature>
<feature type="compositionally biased region" description="Acidic residues" evidence="2">
    <location>
        <begin position="118"/>
        <end position="138"/>
    </location>
</feature>
<evidence type="ECO:0000255" key="1">
    <source>
        <dbReference type="HAMAP-Rule" id="MF_01888"/>
    </source>
</evidence>
<evidence type="ECO:0000256" key="2">
    <source>
        <dbReference type="SAM" id="MobiDB-lite"/>
    </source>
</evidence>
<organism>
    <name type="scientific">Shigella flexneri</name>
    <dbReference type="NCBI Taxonomy" id="623"/>
    <lineage>
        <taxon>Bacteria</taxon>
        <taxon>Pseudomonadati</taxon>
        <taxon>Pseudomonadota</taxon>
        <taxon>Gammaproteobacteria</taxon>
        <taxon>Enterobacterales</taxon>
        <taxon>Enterobacteriaceae</taxon>
        <taxon>Shigella</taxon>
    </lineage>
</organism>
<comment type="function">
    <text evidence="1">Globally modulates RNA abundance by binding to RNase E (Rne) and regulating its endonucleolytic activity. Can modulate Rne action in a substrate-dependent manner by altering the composition of the degradosome.</text>
</comment>
<comment type="subunit">
    <text evidence="1">Interacts with the C-terminal region of Rne.</text>
</comment>
<comment type="subcellular location">
    <subcellularLocation>
        <location evidence="1">Cytoplasm</location>
    </subcellularLocation>
</comment>
<comment type="similarity">
    <text evidence="1">Belongs to the RraB family.</text>
</comment>
<sequence>MANPEQLEEQREETRLIIEELLEDGSDPDALYTIEHHLSADDLETLEKAAVEAFKLGYEVTDPEELEVEDGDIVICCDILSECALNADLIDAQVEQLMTLAEKFDVEYDGWGTYFEDPNGEDGDDEDFVDEDDDGVRH</sequence>
<name>RRAB_SHIFL</name>